<organismHost>
    <name type="scientific">Homo sapiens</name>
    <name type="common">Human</name>
    <dbReference type="NCBI Taxonomy" id="9606"/>
</organismHost>
<name>NSP6_ROTHD</name>
<proteinExistence type="inferred from homology"/>
<comment type="subunit">
    <text evidence="1">Interacts with NSP2 and NSP5.</text>
</comment>
<comment type="subcellular location">
    <subcellularLocation>
        <location evidence="1">Host cytoplasm</location>
    </subcellularLocation>
    <subcellularLocation>
        <location evidence="1">Host mitochondrion</location>
    </subcellularLocation>
    <text evidence="1">Found in spherical cytoplasmic structures, called viral factories, that appear early after infection and are the site of viral replication and packaging.</text>
</comment>
<comment type="similarity">
    <text evidence="1">Belongs to the rotavirus A NSP6 family.</text>
</comment>
<organism>
    <name type="scientific">Rotavirus A (strain RVA/Human/United States/DS-1/1976/G2P1B[4])</name>
    <name type="common">RV-A</name>
    <name type="synonym">Rotavirus A (strain DS1)</name>
    <dbReference type="NCBI Taxonomy" id="10950"/>
    <lineage>
        <taxon>Viruses</taxon>
        <taxon>Riboviria</taxon>
        <taxon>Orthornavirae</taxon>
        <taxon>Duplornaviricota</taxon>
        <taxon>Resentoviricetes</taxon>
        <taxon>Reovirales</taxon>
        <taxon>Sedoreoviridae</taxon>
        <taxon>Rotavirus</taxon>
        <taxon>Rotavirus A</taxon>
    </lineage>
</organism>
<accession>B3SRT4</accession>
<sequence>MNRLQQRQLFLENLLVGVNSTFHQMQKLSINTCCQNLQKILDLLILHRTIHSPAFRLDRMQLRQMQMLACLWIHQRNHDHLATLDTIKWISP</sequence>
<feature type="chain" id="PRO_0000369523" description="Non-structural protein 6">
    <location>
        <begin position="1"/>
        <end position="92"/>
    </location>
</feature>
<feature type="sequence conflict" description="In Ref. 1." ref="1">
    <original>I</original>
    <variation>E</variation>
    <location>
        <position position="30"/>
    </location>
</feature>
<dbReference type="EMBL" id="M33608">
    <property type="protein sequence ID" value="AAA47327.1"/>
    <property type="molecule type" value="Genomic_RNA"/>
</dbReference>
<dbReference type="EMBL" id="EF672583">
    <property type="protein sequence ID" value="ABV53259.1"/>
    <property type="molecule type" value="Genomic_RNA"/>
</dbReference>
<dbReference type="Proteomes" id="UP000001457">
    <property type="component" value="Genome"/>
</dbReference>
<dbReference type="GO" id="GO:0033650">
    <property type="term" value="C:host cell mitochondrion"/>
    <property type="evidence" value="ECO:0007669"/>
    <property type="project" value="UniProtKB-SubCell"/>
</dbReference>
<dbReference type="HAMAP" id="MF_04093">
    <property type="entry name" value="ROTA_NSP6"/>
    <property type="match status" value="1"/>
</dbReference>
<dbReference type="InterPro" id="IPR006950">
    <property type="entry name" value="Rotavirus_NSP6"/>
</dbReference>
<dbReference type="Pfam" id="PF04866">
    <property type="entry name" value="Rota_NS6"/>
    <property type="match status" value="1"/>
</dbReference>
<reference key="1">
    <citation type="journal article" date="1990" name="J. Virol.">
        <title>Sequence analysis of gene 11 equivalents from 'short' and 'super short' strains of rotavirus.</title>
        <authorList>
            <person name="Matsui S.M."/>
            <person name="Mackow E.R."/>
            <person name="Matsuno S."/>
            <person name="Paul P.S."/>
            <person name="Greenberg H.B."/>
        </authorList>
    </citation>
    <scope>NUCLEOTIDE SEQUENCE [GENOMIC RNA]</scope>
</reference>
<reference key="2">
    <citation type="journal article" date="2008" name="J. Virol.">
        <title>Group A human rotavirus genomics: evidence that gene constellations are influenced by viral protein interactions.</title>
        <authorList>
            <person name="Heiman E.M."/>
            <person name="McDonald S.M."/>
            <person name="Barro M."/>
            <person name="Taraporewala Z.F."/>
            <person name="Bar-Magen T."/>
            <person name="Patton J.T."/>
        </authorList>
    </citation>
    <scope>NUCLEOTIDE SEQUENCE [GENOMIC RNA]</scope>
</reference>
<evidence type="ECO:0000255" key="1">
    <source>
        <dbReference type="HAMAP-Rule" id="MF_04093"/>
    </source>
</evidence>
<keyword id="KW-1035">Host cytoplasm</keyword>
<keyword id="KW-1045">Host mitochondrion</keyword>
<protein>
    <recommendedName>
        <fullName evidence="1">Non-structural protein 6</fullName>
        <shortName evidence="1">NSP6</shortName>
    </recommendedName>
</protein>